<dbReference type="EC" id="2.1.1.-" evidence="1"/>
<dbReference type="EC" id="2.1.1.361" evidence="1"/>
<dbReference type="EMBL" id="DQ343297">
    <property type="protein sequence ID" value="ABC68593.1"/>
    <property type="molecule type" value="mRNA"/>
</dbReference>
<dbReference type="EMBL" id="BC122396">
    <property type="protein sequence ID" value="AAI22397.1"/>
    <property type="molecule type" value="mRNA"/>
</dbReference>
<dbReference type="RefSeq" id="NP_001038814.2">
    <property type="nucleotide sequence ID" value="NM_001045349.2"/>
</dbReference>
<dbReference type="SMR" id="Q071E0"/>
<dbReference type="BioGRID" id="591485">
    <property type="interactions" value="1"/>
</dbReference>
<dbReference type="FunCoup" id="Q071E0">
    <property type="interactions" value="1256"/>
</dbReference>
<dbReference type="STRING" id="7955.ENSDARP00000140543"/>
<dbReference type="PaxDb" id="7955-ENSDARP00000089529"/>
<dbReference type="GeneID" id="751629"/>
<dbReference type="KEGG" id="dre:751629"/>
<dbReference type="AGR" id="ZFIN:ZDB-GENE-060825-37"/>
<dbReference type="CTD" id="751629"/>
<dbReference type="ZFIN" id="ZDB-GENE-060825-37">
    <property type="gene designation" value="kmt5aa"/>
</dbReference>
<dbReference type="eggNOG" id="KOG1085">
    <property type="taxonomic scope" value="Eukaryota"/>
</dbReference>
<dbReference type="InParanoid" id="Q071E0"/>
<dbReference type="OrthoDB" id="5560686at2759"/>
<dbReference type="PhylomeDB" id="Q071E0"/>
<dbReference type="Reactome" id="R-DRE-2299718">
    <property type="pathway name" value="Condensation of Prophase Chromosomes"/>
</dbReference>
<dbReference type="Reactome" id="R-DRE-3214841">
    <property type="pathway name" value="PKMTs methylate histone lysines"/>
</dbReference>
<dbReference type="Reactome" id="R-DRE-6804760">
    <property type="pathway name" value="Regulation of TP53 Activity through Methylation"/>
</dbReference>
<dbReference type="PRO" id="PR:Q071E0"/>
<dbReference type="Proteomes" id="UP000000437">
    <property type="component" value="Chromosome 10"/>
</dbReference>
<dbReference type="GO" id="GO:0005634">
    <property type="term" value="C:nucleus"/>
    <property type="evidence" value="ECO:0000318"/>
    <property type="project" value="GO_Central"/>
</dbReference>
<dbReference type="GO" id="GO:0005700">
    <property type="term" value="C:polytene chromosome"/>
    <property type="evidence" value="ECO:0000318"/>
    <property type="project" value="GO_Central"/>
</dbReference>
<dbReference type="GO" id="GO:0042799">
    <property type="term" value="F:histone H4K20 methyltransferase activity"/>
    <property type="evidence" value="ECO:0000318"/>
    <property type="project" value="GO_Central"/>
</dbReference>
<dbReference type="GO" id="GO:0140944">
    <property type="term" value="F:histone H4K20 monomethyltransferase activity"/>
    <property type="evidence" value="ECO:0007669"/>
    <property type="project" value="UniProtKB-EC"/>
</dbReference>
<dbReference type="GO" id="GO:0042054">
    <property type="term" value="F:histone methyltransferase activity"/>
    <property type="evidence" value="ECO:0000250"/>
    <property type="project" value="UniProtKB"/>
</dbReference>
<dbReference type="GO" id="GO:0051301">
    <property type="term" value="P:cell division"/>
    <property type="evidence" value="ECO:0007669"/>
    <property type="project" value="UniProtKB-KW"/>
</dbReference>
<dbReference type="GO" id="GO:0009953">
    <property type="term" value="P:dorsal/ventral pattern formation"/>
    <property type="evidence" value="ECO:0000315"/>
    <property type="project" value="ZFIN"/>
</dbReference>
<dbReference type="GO" id="GO:0032259">
    <property type="term" value="P:methylation"/>
    <property type="evidence" value="ECO:0007669"/>
    <property type="project" value="UniProtKB-KW"/>
</dbReference>
<dbReference type="GO" id="GO:0010628">
    <property type="term" value="P:positive regulation of gene expression"/>
    <property type="evidence" value="ECO:0000315"/>
    <property type="project" value="ZFIN"/>
</dbReference>
<dbReference type="GO" id="GO:0043516">
    <property type="term" value="P:regulation of DNA damage response, signal transduction by p53 class mediator"/>
    <property type="evidence" value="ECO:0000318"/>
    <property type="project" value="GO_Central"/>
</dbReference>
<dbReference type="GO" id="GO:0006357">
    <property type="term" value="P:regulation of transcription by RNA polymerase II"/>
    <property type="evidence" value="ECO:0000318"/>
    <property type="project" value="GO_Central"/>
</dbReference>
<dbReference type="CDD" id="cd10528">
    <property type="entry name" value="SET_SETD8"/>
    <property type="match status" value="1"/>
</dbReference>
<dbReference type="FunFam" id="2.170.270.10:FF:000053">
    <property type="entry name" value="Histone-lysine N-methyltransferase"/>
    <property type="match status" value="1"/>
</dbReference>
<dbReference type="Gene3D" id="2.170.270.10">
    <property type="entry name" value="SET domain"/>
    <property type="match status" value="1"/>
</dbReference>
<dbReference type="InterPro" id="IPR051760">
    <property type="entry name" value="KMT5A"/>
</dbReference>
<dbReference type="InterPro" id="IPR016858">
    <property type="entry name" value="KMT5A-like"/>
</dbReference>
<dbReference type="InterPro" id="IPR047266">
    <property type="entry name" value="KMT5A-like_SET"/>
</dbReference>
<dbReference type="InterPro" id="IPR001214">
    <property type="entry name" value="SET_dom"/>
</dbReference>
<dbReference type="InterPro" id="IPR046341">
    <property type="entry name" value="SET_dom_sf"/>
</dbReference>
<dbReference type="PANTHER" id="PTHR46167">
    <property type="entry name" value="N-LYSINE METHYLTRANSFERASE KMT5A"/>
    <property type="match status" value="1"/>
</dbReference>
<dbReference type="PANTHER" id="PTHR46167:SF1">
    <property type="entry name" value="N-LYSINE METHYLTRANSFERASE KMT5A"/>
    <property type="match status" value="1"/>
</dbReference>
<dbReference type="Pfam" id="PF00856">
    <property type="entry name" value="SET"/>
    <property type="match status" value="1"/>
</dbReference>
<dbReference type="SMART" id="SM00317">
    <property type="entry name" value="SET"/>
    <property type="match status" value="1"/>
</dbReference>
<dbReference type="SUPFAM" id="SSF82199">
    <property type="entry name" value="SET domain"/>
    <property type="match status" value="1"/>
</dbReference>
<dbReference type="PROSITE" id="PS51571">
    <property type="entry name" value="SAM_MT43_PR_SET"/>
    <property type="match status" value="1"/>
</dbReference>
<dbReference type="PROSITE" id="PS50280">
    <property type="entry name" value="SET"/>
    <property type="match status" value="1"/>
</dbReference>
<name>KT5AA_DANRE</name>
<evidence type="ECO:0000250" key="1">
    <source>
        <dbReference type="UniProtKB" id="Q9NQR1"/>
    </source>
</evidence>
<evidence type="ECO:0000255" key="2">
    <source>
        <dbReference type="PROSITE-ProRule" id="PRU00190"/>
    </source>
</evidence>
<evidence type="ECO:0000255" key="3">
    <source>
        <dbReference type="PROSITE-ProRule" id="PRU00904"/>
    </source>
</evidence>
<evidence type="ECO:0000256" key="4">
    <source>
        <dbReference type="SAM" id="MobiDB-lite"/>
    </source>
</evidence>
<evidence type="ECO:0000305" key="5"/>
<protein>
    <recommendedName>
        <fullName evidence="5">N-lysine methyltransferase KMT5A-A</fullName>
        <ecNumber evidence="1">2.1.1.-</ecNumber>
    </recommendedName>
    <alternativeName>
        <fullName>Histone-lysine N-methyltransferase KMT5A-A</fullName>
        <ecNumber evidence="1">2.1.1.361</ecNumber>
    </alternativeName>
    <alternativeName>
        <fullName evidence="1">Lysine-specific methylase 5A-A</fullName>
    </alternativeName>
    <alternativeName>
        <fullName>SET domain-containing protein 8-A</fullName>
    </alternativeName>
</protein>
<accession>Q071E0</accession>
<accession>Q0P3X5</accession>
<feature type="chain" id="PRO_0000316999" description="N-lysine methyltransferase KMT5A-A">
    <location>
        <begin position="1"/>
        <end position="344"/>
    </location>
</feature>
<feature type="domain" description="SET" evidence="2">
    <location>
        <begin position="208"/>
        <end position="329"/>
    </location>
</feature>
<feature type="region of interest" description="Disordered" evidence="4">
    <location>
        <begin position="143"/>
        <end position="176"/>
    </location>
</feature>
<feature type="compositionally biased region" description="Basic residues" evidence="4">
    <location>
        <begin position="145"/>
        <end position="160"/>
    </location>
</feature>
<feature type="binding site" evidence="3">
    <location>
        <begin position="218"/>
        <end position="220"/>
    </location>
    <ligand>
        <name>S-adenosyl-L-methionine</name>
        <dbReference type="ChEBI" id="CHEBI:59789"/>
    </ligand>
</feature>
<feature type="binding site" evidence="2 3">
    <location>
        <position position="263"/>
    </location>
    <ligand>
        <name>S-adenosyl-L-methionine</name>
        <dbReference type="ChEBI" id="CHEBI:59789"/>
    </ligand>
</feature>
<feature type="binding site" evidence="3">
    <location>
        <begin position="290"/>
        <end position="291"/>
    </location>
    <ligand>
        <name>S-adenosyl-L-methionine</name>
        <dbReference type="ChEBI" id="CHEBI:59789"/>
    </ligand>
</feature>
<feature type="sequence conflict" description="In Ref. 2; AAI22397." evidence="5" ref="2">
    <original>D</original>
    <variation>E</variation>
    <location>
        <position position="16"/>
    </location>
</feature>
<feature type="sequence conflict" description="In Ref. 2; AAI22397." evidence="5" ref="2">
    <original>V</original>
    <variation>A</variation>
    <location>
        <position position="89"/>
    </location>
</feature>
<feature type="sequence conflict" description="In Ref. 2; AAI22397." evidence="5" ref="2">
    <original>P</original>
    <variation>R</variation>
    <location>
        <position position="100"/>
    </location>
</feature>
<feature type="sequence conflict" description="In Ref. 2; AAI22397." evidence="5" ref="2">
    <original>S</original>
    <variation>P</variation>
    <location>
        <position position="145"/>
    </location>
</feature>
<organism>
    <name type="scientific">Danio rerio</name>
    <name type="common">Zebrafish</name>
    <name type="synonym">Brachydanio rerio</name>
    <dbReference type="NCBI Taxonomy" id="7955"/>
    <lineage>
        <taxon>Eukaryota</taxon>
        <taxon>Metazoa</taxon>
        <taxon>Chordata</taxon>
        <taxon>Craniata</taxon>
        <taxon>Vertebrata</taxon>
        <taxon>Euteleostomi</taxon>
        <taxon>Actinopterygii</taxon>
        <taxon>Neopterygii</taxon>
        <taxon>Teleostei</taxon>
        <taxon>Ostariophysi</taxon>
        <taxon>Cypriniformes</taxon>
        <taxon>Danionidae</taxon>
        <taxon>Danioninae</taxon>
        <taxon>Danio</taxon>
    </lineage>
</organism>
<comment type="function">
    <text evidence="1">Protein-lysine N-methyltransferase that monomethylates both histones and non-histone proteins. Specifically monomethylates 'Lys-20' of histone H4 (H4K20me1). H4K20me1 is enriched during mitosis and represents a specific tag for epigenetic transcriptional repression. Mainly functions in euchromatin regions, thereby playing a central role in the silencing of euchromatic genes. Required for cell proliferation, probably by contributing to the maintenance of proper higher-order structure of DNA during mitosis. Involved in chromosome condensation and proper cytokinesis.</text>
</comment>
<comment type="catalytic activity">
    <reaction evidence="1 3">
        <text>L-lysyl(20)-[histone H4] + S-adenosyl-L-methionine = N(6)-methyl-L-lysyl(20)-[histone H4] + S-adenosyl-L-homocysteine + H(+)</text>
        <dbReference type="Rhea" id="RHEA:60344"/>
        <dbReference type="Rhea" id="RHEA-COMP:15554"/>
        <dbReference type="Rhea" id="RHEA-COMP:15555"/>
        <dbReference type="ChEBI" id="CHEBI:15378"/>
        <dbReference type="ChEBI" id="CHEBI:29969"/>
        <dbReference type="ChEBI" id="CHEBI:57856"/>
        <dbReference type="ChEBI" id="CHEBI:59789"/>
        <dbReference type="ChEBI" id="CHEBI:61929"/>
        <dbReference type="EC" id="2.1.1.361"/>
    </reaction>
</comment>
<comment type="catalytic activity">
    <reaction evidence="1">
        <text>L-lysyl-[protein] + S-adenosyl-L-methionine = N(6)-methyl-L-lysyl-[protein] + S-adenosyl-L-homocysteine + H(+)</text>
        <dbReference type="Rhea" id="RHEA:51736"/>
        <dbReference type="Rhea" id="RHEA-COMP:9752"/>
        <dbReference type="Rhea" id="RHEA-COMP:13053"/>
        <dbReference type="ChEBI" id="CHEBI:15378"/>
        <dbReference type="ChEBI" id="CHEBI:29969"/>
        <dbReference type="ChEBI" id="CHEBI:57856"/>
        <dbReference type="ChEBI" id="CHEBI:59789"/>
        <dbReference type="ChEBI" id="CHEBI:61929"/>
    </reaction>
</comment>
<comment type="subcellular location">
    <subcellularLocation>
        <location evidence="1">Nucleus</location>
    </subcellularLocation>
    <subcellularLocation>
        <location evidence="1">Chromosome</location>
    </subcellularLocation>
    <text evidence="1">Specifically localizes to mitotic chromosomes. Associates with silent chromatin on euchromatic arms (By similarity).</text>
</comment>
<comment type="similarity">
    <text evidence="3">Belongs to the class V-like SAM-binding methyltransferase superfamily. Histone-lysine methyltransferase family. PR/SET subfamily.</text>
</comment>
<keyword id="KW-0131">Cell cycle</keyword>
<keyword id="KW-0132">Cell division</keyword>
<keyword id="KW-0156">Chromatin regulator</keyword>
<keyword id="KW-0158">Chromosome</keyword>
<keyword id="KW-0489">Methyltransferase</keyword>
<keyword id="KW-0498">Mitosis</keyword>
<keyword id="KW-0539">Nucleus</keyword>
<keyword id="KW-1185">Reference proteome</keyword>
<keyword id="KW-0678">Repressor</keyword>
<keyword id="KW-0949">S-adenosyl-L-methionine</keyword>
<keyword id="KW-0804">Transcription</keyword>
<keyword id="KW-0805">Transcription regulation</keyword>
<keyword id="KW-0808">Transferase</keyword>
<proteinExistence type="evidence at transcript level"/>
<reference key="1">
    <citation type="journal article" date="2004" name="Proc. Natl. Acad. Sci. U.S.A.">
        <title>Hematopoietic gene expression profile in zebrafish kidney marrow.</title>
        <authorList>
            <person name="Song H.-D."/>
            <person name="Sun X.-J."/>
            <person name="Deng M."/>
            <person name="Zhang G.-W."/>
            <person name="Zhou Y."/>
            <person name="Wu X.-Y."/>
            <person name="Sheng Y."/>
            <person name="Chen Y."/>
            <person name="Ruan Z."/>
            <person name="Jiang C.-L."/>
            <person name="Fan H.-Y."/>
            <person name="Zon L.I."/>
            <person name="Kanki J.P."/>
            <person name="Liu T.X."/>
            <person name="Look A.T."/>
            <person name="Chen Z."/>
        </authorList>
    </citation>
    <scope>NUCLEOTIDE SEQUENCE [LARGE SCALE MRNA]</scope>
    <source>
        <tissue>Kidney marrow</tissue>
    </source>
</reference>
<reference key="2">
    <citation type="submission" date="2006-08" db="EMBL/GenBank/DDBJ databases">
        <authorList>
            <consortium name="NIH - Zebrafish Gene Collection (ZGC) project"/>
        </authorList>
    </citation>
    <scope>NUCLEOTIDE SEQUENCE [LARGE SCALE MRNA]</scope>
    <source>
        <tissue>Olfactory epithelium</tissue>
    </source>
</reference>
<gene>
    <name evidence="1" type="primary">kmt5aa</name>
    <name type="synonym">set8a</name>
    <name type="synonym">setd8</name>
    <name type="synonym">setd8a</name>
    <name type="ORF">zgc:153719</name>
</gene>
<sequence>MFPAVNEIKVQTWRRDQRGECPRRSAQCRLFSCAHRECAPAARSLENRGPENRTARPEATMSGDVLCNGHSAFHRLLKHSSSRTHEALVVKIIQENKNTPLFCTAPEPRRDSGVNGEFLLNSAELQDEQTLPLHCIHSAADITSSKHRKPARRKVKRSTKRAAESKSPANRKVTDYFPIRRSSRKSKSELKYEEKQHIDTLISNGIEDGMMVRFIEGKGRGVFATQPFQKGQYVVEYHGDLLQITDAKQREALYAQDPSTGCYMYYFQYLSKTYCVDATKESDRLGRLINHSKNGNCQTKLHAIAGKPHLILVASRDIQEGEELLYDYGDRSKSSIEAHPWLKH</sequence>